<dbReference type="EMBL" id="U00096">
    <property type="protein sequence ID" value="AAC73895.2"/>
    <property type="molecule type" value="Genomic_DNA"/>
</dbReference>
<dbReference type="EMBL" id="AP009048">
    <property type="protein sequence ID" value="BAA35474.2"/>
    <property type="molecule type" value="Genomic_DNA"/>
</dbReference>
<dbReference type="PIR" id="H64817">
    <property type="entry name" value="H64817"/>
</dbReference>
<dbReference type="RefSeq" id="NP_415329.4">
    <property type="nucleotide sequence ID" value="NC_000913.3"/>
</dbReference>
<dbReference type="RefSeq" id="WP_001267253.1">
    <property type="nucleotide sequence ID" value="NZ_STEB01000019.1"/>
</dbReference>
<dbReference type="PDB" id="7A46">
    <property type="method" value="EM"/>
    <property type="resolution" value="3.00 A"/>
    <property type="chains" value="A/B/C/D/E/F/G=1-741"/>
</dbReference>
<dbReference type="PDB" id="9GO3">
    <property type="method" value="EM"/>
    <property type="resolution" value="3.15 A"/>
    <property type="chains" value="A/B/C/D/E/F/G=1-741"/>
</dbReference>
<dbReference type="PDBsum" id="7A46"/>
<dbReference type="PDBsum" id="9GO3"/>
<dbReference type="SMR" id="P75783"/>
<dbReference type="BioGRID" id="4260824">
    <property type="interactions" value="272"/>
</dbReference>
<dbReference type="DIP" id="DIP-11435N"/>
<dbReference type="FunCoup" id="P75783">
    <property type="interactions" value="58"/>
</dbReference>
<dbReference type="STRING" id="511145.b0808"/>
<dbReference type="TCDB" id="1.A.23.3.2">
    <property type="family name" value="the small conductance mechanosensitive ion channel (mscs) family"/>
</dbReference>
<dbReference type="jPOST" id="P75783"/>
<dbReference type="PaxDb" id="511145-b0808"/>
<dbReference type="EnsemblBacteria" id="AAC73895">
    <property type="protein sequence ID" value="AAC73895"/>
    <property type="gene ID" value="b0808"/>
</dbReference>
<dbReference type="GeneID" id="75170874"/>
<dbReference type="GeneID" id="945935"/>
<dbReference type="KEGG" id="ecj:JW5108"/>
<dbReference type="KEGG" id="eco:b0808"/>
<dbReference type="KEGG" id="ecoc:C3026_05090"/>
<dbReference type="PATRIC" id="fig|1411691.4.peg.1470"/>
<dbReference type="EchoBASE" id="EB3104"/>
<dbReference type="eggNOG" id="COG0668">
    <property type="taxonomic scope" value="Bacteria"/>
</dbReference>
<dbReference type="HOGENOM" id="CLU_013626_2_0_6"/>
<dbReference type="InParanoid" id="P75783"/>
<dbReference type="OMA" id="TVCVAIM"/>
<dbReference type="OrthoDB" id="6500477at2"/>
<dbReference type="PhylomeDB" id="P75783"/>
<dbReference type="BioCyc" id="EcoCyc:G6417-MONOMER"/>
<dbReference type="PRO" id="PR:P75783"/>
<dbReference type="Proteomes" id="UP000000625">
    <property type="component" value="Chromosome"/>
</dbReference>
<dbReference type="GO" id="GO:0005886">
    <property type="term" value="C:plasma membrane"/>
    <property type="evidence" value="ECO:0000314"/>
    <property type="project" value="EcoCyc"/>
</dbReference>
<dbReference type="GO" id="GO:0008381">
    <property type="term" value="F:mechanosensitive monoatomic ion channel activity"/>
    <property type="evidence" value="ECO:0000269"/>
    <property type="project" value="EcoCyc"/>
</dbReference>
<dbReference type="GO" id="GO:0071470">
    <property type="term" value="P:cellular response to osmotic stress"/>
    <property type="evidence" value="ECO:0000269"/>
    <property type="project" value="EcoCyc"/>
</dbReference>
<dbReference type="FunFam" id="3.30.70.100:FF:000024">
    <property type="entry name" value="Mechanosensitive ion channel family protein"/>
    <property type="match status" value="1"/>
</dbReference>
<dbReference type="FunFam" id="1.10.287.1260:FF:000003">
    <property type="entry name" value="MscS Mechanosensitive ion channel"/>
    <property type="match status" value="1"/>
</dbReference>
<dbReference type="FunFam" id="2.30.30.60:FF:000001">
    <property type="entry name" value="MscS Mechanosensitive ion channel"/>
    <property type="match status" value="1"/>
</dbReference>
<dbReference type="Gene3D" id="1.10.287.1260">
    <property type="match status" value="1"/>
</dbReference>
<dbReference type="Gene3D" id="2.30.30.60">
    <property type="match status" value="1"/>
</dbReference>
<dbReference type="Gene3D" id="3.30.70.100">
    <property type="match status" value="1"/>
</dbReference>
<dbReference type="InterPro" id="IPR010920">
    <property type="entry name" value="LSM_dom_sf"/>
</dbReference>
<dbReference type="InterPro" id="IPR049142">
    <property type="entry name" value="MS_channel_1st"/>
</dbReference>
<dbReference type="InterPro" id="IPR049278">
    <property type="entry name" value="MS_channel_C"/>
</dbReference>
<dbReference type="InterPro" id="IPR023408">
    <property type="entry name" value="MscS_beta-dom_sf"/>
</dbReference>
<dbReference type="InterPro" id="IPR006685">
    <property type="entry name" value="MscS_channel_2nd"/>
</dbReference>
<dbReference type="InterPro" id="IPR011066">
    <property type="entry name" value="MscS_channel_C_sf"/>
</dbReference>
<dbReference type="InterPro" id="IPR011014">
    <property type="entry name" value="MscS_channel_TM-2"/>
</dbReference>
<dbReference type="InterPro" id="IPR045276">
    <property type="entry name" value="YbiO_bact"/>
</dbReference>
<dbReference type="NCBIfam" id="NF008542">
    <property type="entry name" value="PRK11465.1"/>
    <property type="match status" value="1"/>
</dbReference>
<dbReference type="PANTHER" id="PTHR30460">
    <property type="entry name" value="MODERATE CONDUCTANCE MECHANOSENSITIVE CHANNEL YBIO"/>
    <property type="match status" value="1"/>
</dbReference>
<dbReference type="PANTHER" id="PTHR30460:SF0">
    <property type="entry name" value="MODERATE CONDUCTANCE MECHANOSENSITIVE CHANNEL YBIO"/>
    <property type="match status" value="1"/>
</dbReference>
<dbReference type="Pfam" id="PF21088">
    <property type="entry name" value="MS_channel_1st"/>
    <property type="match status" value="1"/>
</dbReference>
<dbReference type="Pfam" id="PF00924">
    <property type="entry name" value="MS_channel_2nd"/>
    <property type="match status" value="1"/>
</dbReference>
<dbReference type="Pfam" id="PF21082">
    <property type="entry name" value="MS_channel_3rd"/>
    <property type="match status" value="1"/>
</dbReference>
<dbReference type="Pfam" id="PF25392">
    <property type="entry name" value="MS_channel_TM1"/>
    <property type="match status" value="1"/>
</dbReference>
<dbReference type="SUPFAM" id="SSF82689">
    <property type="entry name" value="Mechanosensitive channel protein MscS (YggB), C-terminal domain"/>
    <property type="match status" value="1"/>
</dbReference>
<dbReference type="SUPFAM" id="SSF82861">
    <property type="entry name" value="Mechanosensitive channel protein MscS (YggB), transmembrane region"/>
    <property type="match status" value="1"/>
</dbReference>
<dbReference type="SUPFAM" id="SSF50182">
    <property type="entry name" value="Sm-like ribonucleoproteins"/>
    <property type="match status" value="1"/>
</dbReference>
<dbReference type="PROSITE" id="PS01246">
    <property type="entry name" value="UPF0003"/>
    <property type="match status" value="1"/>
</dbReference>
<evidence type="ECO:0000255" key="1"/>
<evidence type="ECO:0000256" key="2">
    <source>
        <dbReference type="SAM" id="MobiDB-lite"/>
    </source>
</evidence>
<evidence type="ECO:0000269" key="3">
    <source>
    </source>
</evidence>
<evidence type="ECO:0000305" key="4"/>
<evidence type="ECO:0007829" key="5">
    <source>
        <dbReference type="PDB" id="7A46"/>
    </source>
</evidence>
<sequence length="741" mass="81904">MRWILFILFCLLGAPAHAVSIPGVTTTTTTDSTTEPAPEPDIEQKKAAYGALADVLDNDTSRKELIDQLRTVAATPPAEPVPKIVPPTLVEEQTVLQKVTEVSRHYGEALSARFGQLYRNITGSPHKPFNPQTFSNALTHFSMLAVLVFGFYWLIRLCALPLYRKMGQWARQKNRERSNWLQLPAMIIGAFIIDLLLLALTLFVGQVLSDNLNAGSRTIAFQQSLFLNAFALIEFFKAVLRLIFCPNVAELRPFTIQDESARYWSRRLSWLSSLIGYGLIVAVPIISNQVNVQIGALANVIIMLCMTVWALYLIFRNKKEITQHLLNFAEHSLAFFSLFIRAFALVWHWLASAYFIVLFFFSLFDPGNSLKFMMGATVRSLAIIGIAAFVSGMFSRWLAKTITLSPHTQRNYPELQKRLNGWLSAALKTARILTVCVAVMLLLSAWGLFDFWNWLQNGAGQKTVDILIRIALILFFSAVGWTVLASLIENRLASDIHGRPLPSARTRTLLTLFRNALAVIISTITIMIVLSEIGVNIAPLLAGAGALGLAISFGSQTLVKDIITGVFIQFENGMNTGDLVTIGPLTGTVERMSIRSVGVRQDTGAYHIIPWSSITTFANFVRGIGSVVANYDVDRHEDADKANQALKDAVAELMENEEIRGLIIGEPNFAGIVGLSNTAFTLRVSFTTLPLKQWTVRFALDSQVKKHFDLAGVRAPVQTYQVLPAPGATPAEPLPPGEPTL</sequence>
<keyword id="KW-0002">3D-structure</keyword>
<keyword id="KW-0997">Cell inner membrane</keyword>
<keyword id="KW-1003">Cell membrane</keyword>
<keyword id="KW-0407">Ion channel</keyword>
<keyword id="KW-0406">Ion transport</keyword>
<keyword id="KW-0472">Membrane</keyword>
<keyword id="KW-1185">Reference proteome</keyword>
<keyword id="KW-0732">Signal</keyword>
<keyword id="KW-0812">Transmembrane</keyword>
<keyword id="KW-1133">Transmembrane helix</keyword>
<keyword id="KW-0813">Transport</keyword>
<name>YBIO_ECOLI</name>
<proteinExistence type="evidence at protein level"/>
<comment type="function">
    <text evidence="3">Mechanosensitive channel that protects cells against hypoosmotic stress when highly overexpressed.</text>
</comment>
<comment type="subunit">
    <text evidence="3">Homoheptamer.</text>
</comment>
<comment type="subcellular location">
    <subcellularLocation>
        <location evidence="3">Cell inner membrane</location>
        <topology evidence="3">Multi-pass membrane protein</topology>
    </subcellularLocation>
</comment>
<comment type="induction">
    <text evidence="3">Induced by NaCl and RpoS.</text>
</comment>
<comment type="similarity">
    <text evidence="4">Belongs to the MscS (TC 1.A.23) family.</text>
</comment>
<gene>
    <name type="primary">ybiO</name>
    <name type="ordered locus">b0808</name>
    <name type="ordered locus">JW5108</name>
</gene>
<accession>P75783</accession>
<accession>Q9R7S0</accession>
<accession>Q9R7S2</accession>
<accession>Q9ZBC5</accession>
<organism>
    <name type="scientific">Escherichia coli (strain K12)</name>
    <dbReference type="NCBI Taxonomy" id="83333"/>
    <lineage>
        <taxon>Bacteria</taxon>
        <taxon>Pseudomonadati</taxon>
        <taxon>Pseudomonadota</taxon>
        <taxon>Gammaproteobacteria</taxon>
        <taxon>Enterobacterales</taxon>
        <taxon>Enterobacteriaceae</taxon>
        <taxon>Escherichia</taxon>
    </lineage>
</organism>
<feature type="signal peptide" evidence="1">
    <location>
        <begin position="1"/>
        <end position="18"/>
    </location>
</feature>
<feature type="chain" id="PRO_0000110241" description="Moderate conductance mechanosensitive channel YbiO">
    <location>
        <begin position="19"/>
        <end position="741"/>
    </location>
</feature>
<feature type="transmembrane region" description="Helical" evidence="1">
    <location>
        <begin position="143"/>
        <end position="163"/>
    </location>
</feature>
<feature type="transmembrane region" description="Helical" evidence="1">
    <location>
        <begin position="185"/>
        <end position="205"/>
    </location>
</feature>
<feature type="transmembrane region" description="Helical" evidence="1">
    <location>
        <begin position="225"/>
        <end position="245"/>
    </location>
</feature>
<feature type="transmembrane region" description="Helical" evidence="1">
    <location>
        <begin position="268"/>
        <end position="288"/>
    </location>
</feature>
<feature type="transmembrane region" description="Helical" evidence="1">
    <location>
        <begin position="294"/>
        <end position="314"/>
    </location>
</feature>
<feature type="transmembrane region" description="Helical" evidence="1">
    <location>
        <begin position="343"/>
        <end position="363"/>
    </location>
</feature>
<feature type="transmembrane region" description="Helical" evidence="1">
    <location>
        <begin position="372"/>
        <end position="392"/>
    </location>
</feature>
<feature type="transmembrane region" description="Helical" evidence="1">
    <location>
        <begin position="432"/>
        <end position="452"/>
    </location>
</feature>
<feature type="transmembrane region" description="Helical" evidence="1">
    <location>
        <begin position="466"/>
        <end position="486"/>
    </location>
</feature>
<feature type="transmembrane region" description="Helical" evidence="1">
    <location>
        <begin position="509"/>
        <end position="529"/>
    </location>
</feature>
<feature type="transmembrane region" description="Helical" evidence="1">
    <location>
        <begin position="533"/>
        <end position="553"/>
    </location>
</feature>
<feature type="region of interest" description="Disordered" evidence="2">
    <location>
        <begin position="22"/>
        <end position="42"/>
    </location>
</feature>
<feature type="compositionally biased region" description="Low complexity" evidence="2">
    <location>
        <begin position="25"/>
        <end position="34"/>
    </location>
</feature>
<feature type="helix" evidence="5">
    <location>
        <begin position="518"/>
        <end position="532"/>
    </location>
</feature>
<feature type="helix" evidence="5">
    <location>
        <begin position="539"/>
        <end position="570"/>
    </location>
</feature>
<feature type="strand" evidence="5">
    <location>
        <begin position="579"/>
        <end position="582"/>
    </location>
</feature>
<feature type="strand" evidence="5">
    <location>
        <begin position="585"/>
        <end position="592"/>
    </location>
</feature>
<feature type="strand" evidence="5">
    <location>
        <begin position="594"/>
        <end position="601"/>
    </location>
</feature>
<feature type="strand" evidence="5">
    <location>
        <begin position="606"/>
        <end position="610"/>
    </location>
</feature>
<feature type="helix" evidence="5">
    <location>
        <begin position="611"/>
        <end position="613"/>
    </location>
</feature>
<feature type="strand" evidence="5">
    <location>
        <begin position="615"/>
        <end position="620"/>
    </location>
</feature>
<feature type="strand" evidence="5">
    <location>
        <begin position="625"/>
        <end position="634"/>
    </location>
</feature>
<feature type="helix" evidence="5">
    <location>
        <begin position="639"/>
        <end position="655"/>
    </location>
</feature>
<feature type="helix" evidence="5">
    <location>
        <begin position="657"/>
        <end position="660"/>
    </location>
</feature>
<feature type="strand" evidence="5">
    <location>
        <begin position="668"/>
        <end position="675"/>
    </location>
</feature>
<feature type="strand" evidence="5">
    <location>
        <begin position="677"/>
        <end position="689"/>
    </location>
</feature>
<feature type="helix" evidence="5">
    <location>
        <begin position="693"/>
        <end position="710"/>
    </location>
</feature>
<reference key="1">
    <citation type="journal article" date="1996" name="DNA Res.">
        <title>A 718-kb DNA sequence of the Escherichia coli K-12 genome corresponding to the 12.7-28.0 min region on the linkage map.</title>
        <authorList>
            <person name="Oshima T."/>
            <person name="Aiba H."/>
            <person name="Baba T."/>
            <person name="Fujita K."/>
            <person name="Hayashi K."/>
            <person name="Honjo A."/>
            <person name="Ikemoto K."/>
            <person name="Inada T."/>
            <person name="Itoh T."/>
            <person name="Kajihara M."/>
            <person name="Kanai K."/>
            <person name="Kashimoto K."/>
            <person name="Kimura S."/>
            <person name="Kitagawa M."/>
            <person name="Makino K."/>
            <person name="Masuda S."/>
            <person name="Miki T."/>
            <person name="Mizobuchi K."/>
            <person name="Mori H."/>
            <person name="Motomura K."/>
            <person name="Nakamura Y."/>
            <person name="Nashimoto H."/>
            <person name="Nishio Y."/>
            <person name="Saito N."/>
            <person name="Sampei G."/>
            <person name="Seki Y."/>
            <person name="Tagami H."/>
            <person name="Takemoto K."/>
            <person name="Wada C."/>
            <person name="Yamamoto Y."/>
            <person name="Yano M."/>
            <person name="Horiuchi T."/>
        </authorList>
    </citation>
    <scope>NUCLEOTIDE SEQUENCE [LARGE SCALE GENOMIC DNA]</scope>
    <source>
        <strain>K12 / W3110 / ATCC 27325 / DSM 5911</strain>
    </source>
</reference>
<reference key="2">
    <citation type="journal article" date="1997" name="Science">
        <title>The complete genome sequence of Escherichia coli K-12.</title>
        <authorList>
            <person name="Blattner F.R."/>
            <person name="Plunkett G. III"/>
            <person name="Bloch C.A."/>
            <person name="Perna N.T."/>
            <person name="Burland V."/>
            <person name="Riley M."/>
            <person name="Collado-Vides J."/>
            <person name="Glasner J.D."/>
            <person name="Rode C.K."/>
            <person name="Mayhew G.F."/>
            <person name="Gregor J."/>
            <person name="Davis N.W."/>
            <person name="Kirkpatrick H.A."/>
            <person name="Goeden M.A."/>
            <person name="Rose D.J."/>
            <person name="Mau B."/>
            <person name="Shao Y."/>
        </authorList>
    </citation>
    <scope>NUCLEOTIDE SEQUENCE [LARGE SCALE GENOMIC DNA]</scope>
    <source>
        <strain>K12 / MG1655 / ATCC 47076</strain>
    </source>
</reference>
<reference key="3">
    <citation type="journal article" date="2006" name="Mol. Syst. Biol.">
        <title>Highly accurate genome sequences of Escherichia coli K-12 strains MG1655 and W3110.</title>
        <authorList>
            <person name="Hayashi K."/>
            <person name="Morooka N."/>
            <person name="Yamamoto Y."/>
            <person name="Fujita K."/>
            <person name="Isono K."/>
            <person name="Choi S."/>
            <person name="Ohtsubo E."/>
            <person name="Baba T."/>
            <person name="Wanner B.L."/>
            <person name="Mori H."/>
            <person name="Horiuchi T."/>
        </authorList>
    </citation>
    <scope>NUCLEOTIDE SEQUENCE [LARGE SCALE GENOMIC DNA]</scope>
    <source>
        <strain>K12 / W3110 / ATCC 27325 / DSM 5911</strain>
    </source>
</reference>
<reference key="4">
    <citation type="journal article" date="2012" name="Channels">
        <title>Characterization of three novel mechanosensitive channel activities in Escherichia coli.</title>
        <authorList>
            <person name="Edwards M.D."/>
            <person name="Black S."/>
            <person name="Rasmussen T."/>
            <person name="Rasmussen A."/>
            <person name="Stokes N.R."/>
            <person name="Stephen T.L."/>
            <person name="Miller S."/>
            <person name="Booth I.R."/>
        </authorList>
    </citation>
    <scope>FUNCTION</scope>
    <scope>SUBUNIT</scope>
    <scope>SUBCELLULAR LOCATION</scope>
    <scope>INDUCTION</scope>
</reference>
<protein>
    <recommendedName>
        <fullName>Moderate conductance mechanosensitive channel YbiO</fullName>
    </recommendedName>
</protein>